<evidence type="ECO:0000255" key="1">
    <source>
        <dbReference type="HAMAP-Rule" id="MF_00420"/>
    </source>
</evidence>
<comment type="function">
    <text evidence="1">Part of the phosphoribosylformylglycinamidine synthase complex involved in the purines biosynthetic pathway. Catalyzes the ATP-dependent conversion of formylglycinamide ribonucleotide (FGAR) and glutamine to yield formylglycinamidine ribonucleotide (FGAM) and glutamate. The FGAM synthase complex is composed of three subunits. PurQ produces an ammonia molecule by converting glutamine to glutamate. PurL transfers the ammonia molecule to FGAR to form FGAM in an ATP-dependent manner. PurS interacts with PurQ and PurL and is thought to assist in the transfer of the ammonia molecule from PurQ to PurL.</text>
</comment>
<comment type="catalytic activity">
    <reaction evidence="1">
        <text>N(2)-formyl-N(1)-(5-phospho-beta-D-ribosyl)glycinamide + L-glutamine + ATP + H2O = 2-formamido-N(1)-(5-O-phospho-beta-D-ribosyl)acetamidine + L-glutamate + ADP + phosphate + H(+)</text>
        <dbReference type="Rhea" id="RHEA:17129"/>
        <dbReference type="ChEBI" id="CHEBI:15377"/>
        <dbReference type="ChEBI" id="CHEBI:15378"/>
        <dbReference type="ChEBI" id="CHEBI:29985"/>
        <dbReference type="ChEBI" id="CHEBI:30616"/>
        <dbReference type="ChEBI" id="CHEBI:43474"/>
        <dbReference type="ChEBI" id="CHEBI:58359"/>
        <dbReference type="ChEBI" id="CHEBI:147286"/>
        <dbReference type="ChEBI" id="CHEBI:147287"/>
        <dbReference type="ChEBI" id="CHEBI:456216"/>
        <dbReference type="EC" id="6.3.5.3"/>
    </reaction>
</comment>
<comment type="pathway">
    <text evidence="1">Purine metabolism; IMP biosynthesis via de novo pathway; 5-amino-1-(5-phospho-D-ribosyl)imidazole from N(2)-formyl-N(1)-(5-phospho-D-ribosyl)glycinamide: step 1/2.</text>
</comment>
<comment type="subunit">
    <text evidence="1">Monomer. Part of the FGAM synthase complex composed of 1 PurL, 1 PurQ and 2 PurS subunits.</text>
</comment>
<comment type="subcellular location">
    <subcellularLocation>
        <location evidence="1">Cytoplasm</location>
    </subcellularLocation>
</comment>
<comment type="similarity">
    <text evidence="1">Belongs to the FGAMS family.</text>
</comment>
<name>PURL_SULTO</name>
<keyword id="KW-0067">ATP-binding</keyword>
<keyword id="KW-0963">Cytoplasm</keyword>
<keyword id="KW-0436">Ligase</keyword>
<keyword id="KW-0460">Magnesium</keyword>
<keyword id="KW-0479">Metal-binding</keyword>
<keyword id="KW-0547">Nucleotide-binding</keyword>
<keyword id="KW-0658">Purine biosynthesis</keyword>
<keyword id="KW-1185">Reference proteome</keyword>
<sequence>MKITLSSYEMELVRKKLAREPNEAEWLTIDALWSEHCSYKSSKVFLRSFPSEGEKVLMGIEDWQDAGALDVGDGWAIVLKLESHNHPSAIDPFNGAATGVGGIIRDIISKGAKPIALLDMIRVGNLSNPRNKWLLKNIIAGIGFYGNSIGVPVVGGELDFDDSYNDNPLVDVAGVGIVRKDKIVPSVVKEPGLKIVIVGLTGLDGLGGASFASRKLSGEDEIGAVQIADPFAGKIVLDVTLEIADKVEAIKDLGGGGLVVGVTEMANGLGAIVNLDKVPLRVKDLKPEEILVSETQERMLFAVKEENVNEVCKAFEYYDYPCAVIGEFVKEPYIKFLYGGKEIVSLPSDLLLSPPRFIWEIKKPKLIKSDKKPEVGLEESIRAILSRIISKEWAYSQFDYEVGTSTVLKPGEADSALISLPNGKLLALKGDANPDLCAEDSYECGKSIVAEAYRNLASVGAIGIGVVDHLQFGDPKKPEVYYSFVEAIRGIAEASKFFSTPIVGGKVSFYNENKEGKAIKPTPLIVMAGLIKDKFLRNKVVEDSYITLIGFTRDEMRGSLFGKIFGNYGEVPKARLNEDYLASQLVVNLINDEKIFFAKDINKGGLIASLFSILVKGMGVEIETSSIPSDTDDWIPKLYSENGGRFIVLTNDPEYIIRKSKGIHISVIGKITKDQGIIKIDNKEINVNKEIDNYYNYLYEVMS</sequence>
<proteinExistence type="inferred from homology"/>
<protein>
    <recommendedName>
        <fullName evidence="1">Phosphoribosylformylglycinamidine synthase subunit PurL</fullName>
        <shortName evidence="1">FGAM synthase</shortName>
        <ecNumber evidence="1">6.3.5.3</ecNumber>
    </recommendedName>
    <alternativeName>
        <fullName evidence="1">Formylglycinamide ribonucleotide amidotransferase subunit II</fullName>
        <shortName evidence="1">FGAR amidotransferase II</shortName>
        <shortName evidence="1">FGAR-AT II</shortName>
    </alternativeName>
    <alternativeName>
        <fullName evidence="1">Glutamine amidotransferase PurL</fullName>
    </alternativeName>
    <alternativeName>
        <fullName evidence="1">Phosphoribosylformylglycinamidine synthase subunit II</fullName>
    </alternativeName>
</protein>
<accession>Q970V6</accession>
<dbReference type="EC" id="6.3.5.3" evidence="1"/>
<dbReference type="EMBL" id="BA000023">
    <property type="protein sequence ID" value="BAB66567.1"/>
    <property type="molecule type" value="Genomic_DNA"/>
</dbReference>
<dbReference type="RefSeq" id="WP_010979545.1">
    <property type="nucleotide sequence ID" value="NC_003106.2"/>
</dbReference>
<dbReference type="SMR" id="Q970V6"/>
<dbReference type="STRING" id="273063.STK_14950"/>
<dbReference type="GeneID" id="1459531"/>
<dbReference type="KEGG" id="sto:STK_14950"/>
<dbReference type="PATRIC" id="fig|273063.9.peg.1702"/>
<dbReference type="eggNOG" id="arCOG00641">
    <property type="taxonomic scope" value="Archaea"/>
</dbReference>
<dbReference type="OrthoDB" id="8251at2157"/>
<dbReference type="UniPathway" id="UPA00074">
    <property type="reaction ID" value="UER00128"/>
</dbReference>
<dbReference type="Proteomes" id="UP000001015">
    <property type="component" value="Chromosome"/>
</dbReference>
<dbReference type="GO" id="GO:0005737">
    <property type="term" value="C:cytoplasm"/>
    <property type="evidence" value="ECO:0007669"/>
    <property type="project" value="UniProtKB-SubCell"/>
</dbReference>
<dbReference type="GO" id="GO:0005524">
    <property type="term" value="F:ATP binding"/>
    <property type="evidence" value="ECO:0007669"/>
    <property type="project" value="UniProtKB-UniRule"/>
</dbReference>
<dbReference type="GO" id="GO:0000287">
    <property type="term" value="F:magnesium ion binding"/>
    <property type="evidence" value="ECO:0007669"/>
    <property type="project" value="UniProtKB-UniRule"/>
</dbReference>
<dbReference type="GO" id="GO:0004642">
    <property type="term" value="F:phosphoribosylformylglycinamidine synthase activity"/>
    <property type="evidence" value="ECO:0007669"/>
    <property type="project" value="UniProtKB-UniRule"/>
</dbReference>
<dbReference type="GO" id="GO:0006189">
    <property type="term" value="P:'de novo' IMP biosynthetic process"/>
    <property type="evidence" value="ECO:0007669"/>
    <property type="project" value="UniProtKB-UniRule"/>
</dbReference>
<dbReference type="CDD" id="cd02203">
    <property type="entry name" value="PurL_repeat1"/>
    <property type="match status" value="1"/>
</dbReference>
<dbReference type="CDD" id="cd02204">
    <property type="entry name" value="PurL_repeat2"/>
    <property type="match status" value="1"/>
</dbReference>
<dbReference type="FunFam" id="3.30.1330.10:FF:000004">
    <property type="entry name" value="Phosphoribosylformylglycinamidine synthase subunit PurL"/>
    <property type="match status" value="1"/>
</dbReference>
<dbReference type="Gene3D" id="3.90.650.10">
    <property type="entry name" value="PurM-like C-terminal domain"/>
    <property type="match status" value="2"/>
</dbReference>
<dbReference type="Gene3D" id="3.30.1330.10">
    <property type="entry name" value="PurM-like, N-terminal domain"/>
    <property type="match status" value="2"/>
</dbReference>
<dbReference type="HAMAP" id="MF_00420">
    <property type="entry name" value="PurL_2"/>
    <property type="match status" value="1"/>
</dbReference>
<dbReference type="InterPro" id="IPR010074">
    <property type="entry name" value="PRibForGlyAmidine_synth_PurL"/>
</dbReference>
<dbReference type="InterPro" id="IPR041609">
    <property type="entry name" value="PurL_linker"/>
</dbReference>
<dbReference type="InterPro" id="IPR010918">
    <property type="entry name" value="PurM-like_C_dom"/>
</dbReference>
<dbReference type="InterPro" id="IPR036676">
    <property type="entry name" value="PurM-like_C_sf"/>
</dbReference>
<dbReference type="InterPro" id="IPR016188">
    <property type="entry name" value="PurM-like_N"/>
</dbReference>
<dbReference type="InterPro" id="IPR036921">
    <property type="entry name" value="PurM-like_N_sf"/>
</dbReference>
<dbReference type="NCBIfam" id="TIGR01736">
    <property type="entry name" value="FGAM_synth_II"/>
    <property type="match status" value="1"/>
</dbReference>
<dbReference type="NCBIfam" id="NF002290">
    <property type="entry name" value="PRK01213.1"/>
    <property type="match status" value="1"/>
</dbReference>
<dbReference type="PANTHER" id="PTHR43555">
    <property type="entry name" value="PHOSPHORIBOSYLFORMYLGLYCINAMIDINE SYNTHASE SUBUNIT PURL"/>
    <property type="match status" value="1"/>
</dbReference>
<dbReference type="PANTHER" id="PTHR43555:SF1">
    <property type="entry name" value="PHOSPHORIBOSYLFORMYLGLYCINAMIDINE SYNTHASE SUBUNIT PURL"/>
    <property type="match status" value="1"/>
</dbReference>
<dbReference type="Pfam" id="PF00586">
    <property type="entry name" value="AIRS"/>
    <property type="match status" value="2"/>
</dbReference>
<dbReference type="Pfam" id="PF02769">
    <property type="entry name" value="AIRS_C"/>
    <property type="match status" value="1"/>
</dbReference>
<dbReference type="Pfam" id="PF18072">
    <property type="entry name" value="FGAR-AT_linker"/>
    <property type="match status" value="1"/>
</dbReference>
<dbReference type="PIRSF" id="PIRSF001587">
    <property type="entry name" value="FGAM_synthase_II"/>
    <property type="match status" value="1"/>
</dbReference>
<dbReference type="SUPFAM" id="SSF56042">
    <property type="entry name" value="PurM C-terminal domain-like"/>
    <property type="match status" value="2"/>
</dbReference>
<dbReference type="SUPFAM" id="SSF55326">
    <property type="entry name" value="PurM N-terminal domain-like"/>
    <property type="match status" value="2"/>
</dbReference>
<organism>
    <name type="scientific">Sulfurisphaera tokodaii (strain DSM 16993 / JCM 10545 / NBRC 100140 / 7)</name>
    <name type="common">Sulfolobus tokodaii</name>
    <dbReference type="NCBI Taxonomy" id="273063"/>
    <lineage>
        <taxon>Archaea</taxon>
        <taxon>Thermoproteota</taxon>
        <taxon>Thermoprotei</taxon>
        <taxon>Sulfolobales</taxon>
        <taxon>Sulfolobaceae</taxon>
        <taxon>Sulfurisphaera</taxon>
    </lineage>
</organism>
<feature type="chain" id="PRO_0000100526" description="Phosphoribosylformylglycinamidine synthase subunit PurL">
    <location>
        <begin position="1"/>
        <end position="703"/>
    </location>
</feature>
<feature type="active site" evidence="1">
    <location>
        <position position="36"/>
    </location>
</feature>
<feature type="active site" description="Proton acceptor" evidence="1">
    <location>
        <position position="84"/>
    </location>
</feature>
<feature type="binding site" evidence="1">
    <location>
        <position position="39"/>
    </location>
    <ligand>
        <name>ATP</name>
        <dbReference type="ChEBI" id="CHEBI:30616"/>
    </ligand>
</feature>
<feature type="binding site" evidence="1">
    <location>
        <position position="80"/>
    </location>
    <ligand>
        <name>ATP</name>
        <dbReference type="ChEBI" id="CHEBI:30616"/>
    </ligand>
</feature>
<feature type="binding site" evidence="1">
    <location>
        <position position="82"/>
    </location>
    <ligand>
        <name>Mg(2+)</name>
        <dbReference type="ChEBI" id="CHEBI:18420"/>
        <label>1</label>
    </ligand>
</feature>
<feature type="binding site" evidence="1">
    <location>
        <begin position="83"/>
        <end position="86"/>
    </location>
    <ligand>
        <name>substrate</name>
    </ligand>
</feature>
<feature type="binding site" evidence="1">
    <location>
        <position position="105"/>
    </location>
    <ligand>
        <name>substrate</name>
    </ligand>
</feature>
<feature type="binding site" evidence="1">
    <location>
        <position position="106"/>
    </location>
    <ligand>
        <name>Mg(2+)</name>
        <dbReference type="ChEBI" id="CHEBI:18420"/>
        <label>2</label>
    </ligand>
</feature>
<feature type="binding site" evidence="1">
    <location>
        <position position="226"/>
    </location>
    <ligand>
        <name>substrate</name>
    </ligand>
</feature>
<feature type="binding site" evidence="1">
    <location>
        <position position="252"/>
    </location>
    <ligand>
        <name>Mg(2+)</name>
        <dbReference type="ChEBI" id="CHEBI:18420"/>
        <label>2</label>
    </ligand>
</feature>
<feature type="binding site" evidence="1">
    <location>
        <begin position="294"/>
        <end position="296"/>
    </location>
    <ligand>
        <name>substrate</name>
    </ligand>
</feature>
<feature type="binding site" evidence="1">
    <location>
        <position position="468"/>
    </location>
    <ligand>
        <name>ATP</name>
        <dbReference type="ChEBI" id="CHEBI:30616"/>
    </ligand>
</feature>
<feature type="binding site" evidence="1">
    <location>
        <position position="505"/>
    </location>
    <ligand>
        <name>ATP</name>
        <dbReference type="ChEBI" id="CHEBI:30616"/>
    </ligand>
</feature>
<feature type="binding site" evidence="1">
    <location>
        <position position="508"/>
    </location>
    <ligand>
        <name>substrate</name>
    </ligand>
</feature>
<reference key="1">
    <citation type="journal article" date="2001" name="DNA Res.">
        <title>Complete genome sequence of an aerobic thermoacidophilic Crenarchaeon, Sulfolobus tokodaii strain7.</title>
        <authorList>
            <person name="Kawarabayasi Y."/>
            <person name="Hino Y."/>
            <person name="Horikawa H."/>
            <person name="Jin-no K."/>
            <person name="Takahashi M."/>
            <person name="Sekine M."/>
            <person name="Baba S."/>
            <person name="Ankai A."/>
            <person name="Kosugi H."/>
            <person name="Hosoyama A."/>
            <person name="Fukui S."/>
            <person name="Nagai Y."/>
            <person name="Nishijima K."/>
            <person name="Otsuka R."/>
            <person name="Nakazawa H."/>
            <person name="Takamiya M."/>
            <person name="Kato Y."/>
            <person name="Yoshizawa T."/>
            <person name="Tanaka T."/>
            <person name="Kudoh Y."/>
            <person name="Yamazaki J."/>
            <person name="Kushida N."/>
            <person name="Oguchi A."/>
            <person name="Aoki K."/>
            <person name="Masuda S."/>
            <person name="Yanagii M."/>
            <person name="Nishimura M."/>
            <person name="Yamagishi A."/>
            <person name="Oshima T."/>
            <person name="Kikuchi H."/>
        </authorList>
    </citation>
    <scope>NUCLEOTIDE SEQUENCE [LARGE SCALE GENOMIC DNA]</scope>
    <source>
        <strain>DSM 16993 / JCM 10545 / NBRC 100140 / 7</strain>
    </source>
</reference>
<gene>
    <name evidence="1" type="primary">purL</name>
    <name type="ordered locus">STK_14950</name>
</gene>